<dbReference type="EC" id="2.1.1.228" evidence="1"/>
<dbReference type="EMBL" id="CP000688">
    <property type="protein sequence ID" value="ABQ16904.1"/>
    <property type="molecule type" value="Genomic_DNA"/>
</dbReference>
<dbReference type="SMR" id="A5FSB5"/>
<dbReference type="KEGG" id="deb:DehaBAV1_0318"/>
<dbReference type="PATRIC" id="fig|216389.18.peg.357"/>
<dbReference type="HOGENOM" id="CLU_047363_0_1_0"/>
<dbReference type="GO" id="GO:0005829">
    <property type="term" value="C:cytosol"/>
    <property type="evidence" value="ECO:0007669"/>
    <property type="project" value="TreeGrafter"/>
</dbReference>
<dbReference type="GO" id="GO:0052906">
    <property type="term" value="F:tRNA (guanine(37)-N1)-methyltransferase activity"/>
    <property type="evidence" value="ECO:0007669"/>
    <property type="project" value="UniProtKB-UniRule"/>
</dbReference>
<dbReference type="GO" id="GO:0002939">
    <property type="term" value="P:tRNA N1-guanine methylation"/>
    <property type="evidence" value="ECO:0007669"/>
    <property type="project" value="TreeGrafter"/>
</dbReference>
<dbReference type="CDD" id="cd18080">
    <property type="entry name" value="TrmD-like"/>
    <property type="match status" value="1"/>
</dbReference>
<dbReference type="FunFam" id="1.10.1270.20:FF:000001">
    <property type="entry name" value="tRNA (guanine-N(1)-)-methyltransferase"/>
    <property type="match status" value="1"/>
</dbReference>
<dbReference type="FunFam" id="3.40.1280.10:FF:000001">
    <property type="entry name" value="tRNA (guanine-N(1)-)-methyltransferase"/>
    <property type="match status" value="1"/>
</dbReference>
<dbReference type="Gene3D" id="3.40.1280.10">
    <property type="match status" value="1"/>
</dbReference>
<dbReference type="Gene3D" id="1.10.1270.20">
    <property type="entry name" value="tRNA(m1g37)methyltransferase, domain 2"/>
    <property type="match status" value="1"/>
</dbReference>
<dbReference type="HAMAP" id="MF_00605">
    <property type="entry name" value="TrmD"/>
    <property type="match status" value="1"/>
</dbReference>
<dbReference type="InterPro" id="IPR029028">
    <property type="entry name" value="Alpha/beta_knot_MTases"/>
</dbReference>
<dbReference type="InterPro" id="IPR023148">
    <property type="entry name" value="tRNA_m1G_MeTrfase_C_sf"/>
</dbReference>
<dbReference type="InterPro" id="IPR002649">
    <property type="entry name" value="tRNA_m1G_MeTrfase_TrmD"/>
</dbReference>
<dbReference type="InterPro" id="IPR029026">
    <property type="entry name" value="tRNA_m1G_MTases_N"/>
</dbReference>
<dbReference type="InterPro" id="IPR016009">
    <property type="entry name" value="tRNA_MeTrfase_TRMD/TRM10"/>
</dbReference>
<dbReference type="NCBIfam" id="NF000648">
    <property type="entry name" value="PRK00026.1"/>
    <property type="match status" value="1"/>
</dbReference>
<dbReference type="NCBIfam" id="TIGR00088">
    <property type="entry name" value="trmD"/>
    <property type="match status" value="1"/>
</dbReference>
<dbReference type="PANTHER" id="PTHR46417">
    <property type="entry name" value="TRNA (GUANINE-N(1)-)-METHYLTRANSFERASE"/>
    <property type="match status" value="1"/>
</dbReference>
<dbReference type="PANTHER" id="PTHR46417:SF1">
    <property type="entry name" value="TRNA (GUANINE-N(1)-)-METHYLTRANSFERASE"/>
    <property type="match status" value="1"/>
</dbReference>
<dbReference type="Pfam" id="PF01746">
    <property type="entry name" value="tRNA_m1G_MT"/>
    <property type="match status" value="1"/>
</dbReference>
<dbReference type="PIRSF" id="PIRSF000386">
    <property type="entry name" value="tRNA_mtase"/>
    <property type="match status" value="1"/>
</dbReference>
<dbReference type="SUPFAM" id="SSF75217">
    <property type="entry name" value="alpha/beta knot"/>
    <property type="match status" value="1"/>
</dbReference>
<reference key="1">
    <citation type="submission" date="2007-05" db="EMBL/GenBank/DDBJ databases">
        <title>Complete sequence of Dehalococcoides sp. BAV1.</title>
        <authorList>
            <consortium name="US DOE Joint Genome Institute"/>
            <person name="Copeland A."/>
            <person name="Lucas S."/>
            <person name="Lapidus A."/>
            <person name="Barry K."/>
            <person name="Detter J.C."/>
            <person name="Glavina del Rio T."/>
            <person name="Hammon N."/>
            <person name="Israni S."/>
            <person name="Pitluck S."/>
            <person name="Lowry S."/>
            <person name="Clum A."/>
            <person name="Schmutz J."/>
            <person name="Larimer F."/>
            <person name="Land M."/>
            <person name="Hauser L."/>
            <person name="Kyrpides N."/>
            <person name="Kim E."/>
            <person name="Ritalahti K.M."/>
            <person name="Loeffler F."/>
            <person name="Richardson P."/>
        </authorList>
    </citation>
    <scope>NUCLEOTIDE SEQUENCE [LARGE SCALE GENOMIC DNA]</scope>
    <source>
        <strain>ATCC BAA-2100 / JCM 16839 / KCTC 5957 / BAV1</strain>
    </source>
</reference>
<organism>
    <name type="scientific">Dehalococcoides mccartyi (strain ATCC BAA-2100 / JCM 16839 / KCTC 5957 / BAV1)</name>
    <dbReference type="NCBI Taxonomy" id="216389"/>
    <lineage>
        <taxon>Bacteria</taxon>
        <taxon>Bacillati</taxon>
        <taxon>Chloroflexota</taxon>
        <taxon>Dehalococcoidia</taxon>
        <taxon>Dehalococcoidales</taxon>
        <taxon>Dehalococcoidaceae</taxon>
        <taxon>Dehalococcoides</taxon>
    </lineage>
</organism>
<protein>
    <recommendedName>
        <fullName evidence="1">tRNA (guanine-N(1)-)-methyltransferase</fullName>
        <ecNumber evidence="1">2.1.1.228</ecNumber>
    </recommendedName>
    <alternativeName>
        <fullName evidence="1">M1G-methyltransferase</fullName>
    </alternativeName>
    <alternativeName>
        <fullName evidence="1">tRNA [GM37] methyltransferase</fullName>
    </alternativeName>
</protein>
<evidence type="ECO:0000255" key="1">
    <source>
        <dbReference type="HAMAP-Rule" id="MF_00605"/>
    </source>
</evidence>
<name>TRMD_DEHMB</name>
<accession>A5FSB5</accession>
<comment type="function">
    <text evidence="1">Specifically methylates guanosine-37 in various tRNAs.</text>
</comment>
<comment type="catalytic activity">
    <reaction evidence="1">
        <text>guanosine(37) in tRNA + S-adenosyl-L-methionine = N(1)-methylguanosine(37) in tRNA + S-adenosyl-L-homocysteine + H(+)</text>
        <dbReference type="Rhea" id="RHEA:36899"/>
        <dbReference type="Rhea" id="RHEA-COMP:10145"/>
        <dbReference type="Rhea" id="RHEA-COMP:10147"/>
        <dbReference type="ChEBI" id="CHEBI:15378"/>
        <dbReference type="ChEBI" id="CHEBI:57856"/>
        <dbReference type="ChEBI" id="CHEBI:59789"/>
        <dbReference type="ChEBI" id="CHEBI:73542"/>
        <dbReference type="ChEBI" id="CHEBI:74269"/>
        <dbReference type="EC" id="2.1.1.228"/>
    </reaction>
</comment>
<comment type="subunit">
    <text evidence="1">Homodimer.</text>
</comment>
<comment type="subcellular location">
    <subcellularLocation>
        <location evidence="1">Cytoplasm</location>
    </subcellularLocation>
</comment>
<comment type="similarity">
    <text evidence="1">Belongs to the RNA methyltransferase TrmD family.</text>
</comment>
<feature type="chain" id="PRO_1000082516" description="tRNA (guanine-N(1)-)-methyltransferase">
    <location>
        <begin position="1"/>
        <end position="248"/>
    </location>
</feature>
<feature type="binding site" evidence="1">
    <location>
        <position position="113"/>
    </location>
    <ligand>
        <name>S-adenosyl-L-methionine</name>
        <dbReference type="ChEBI" id="CHEBI:59789"/>
    </ligand>
</feature>
<feature type="binding site" evidence="1">
    <location>
        <begin position="133"/>
        <end position="138"/>
    </location>
    <ligand>
        <name>S-adenosyl-L-methionine</name>
        <dbReference type="ChEBI" id="CHEBI:59789"/>
    </ligand>
</feature>
<keyword id="KW-0963">Cytoplasm</keyword>
<keyword id="KW-0489">Methyltransferase</keyword>
<keyword id="KW-0949">S-adenosyl-L-methionine</keyword>
<keyword id="KW-0808">Transferase</keyword>
<keyword id="KW-0819">tRNA processing</keyword>
<proteinExistence type="inferred from homology"/>
<gene>
    <name evidence="1" type="primary">trmD</name>
    <name type="ordered locus">DehaBAV1_0318</name>
</gene>
<sequence length="248" mass="28046">MKIDVLTLFPEMFQSPFEESIFKRATDNNLVRLEIHNFRDFAHDKHHAVDDSPYGGGAGMLLKPEPLFEAVEDVLREDPTPAPVILLSPQGRSFNQEVARELAKHERLIIICGHYEGFDERVREHLSTDEISIGDFVLTGGELAAMVVIDAVSRLIPGVLGSGESSQDDSHSNGLLEHPHYTRPPVFRGWGIPDVLLSGNHAQINRWRRKESLRRTLKRRPDMFEKIPLSKADRKLVDEILAEENTQG</sequence>